<keyword id="KW-0378">Hydrolase</keyword>
<keyword id="KW-0456">Lyase</keyword>
<keyword id="KW-0460">Magnesium</keyword>
<keyword id="KW-0479">Metal-binding</keyword>
<evidence type="ECO:0000250" key="1">
    <source>
        <dbReference type="UniProtKB" id="A0A1C9J6A7"/>
    </source>
</evidence>
<evidence type="ECO:0000250" key="2">
    <source>
        <dbReference type="UniProtKB" id="Q40577"/>
    </source>
</evidence>
<evidence type="ECO:0000269" key="3">
    <source>
    </source>
</evidence>
<evidence type="ECO:0000303" key="4">
    <source>
    </source>
</evidence>
<evidence type="ECO:0000305" key="5"/>
<protein>
    <recommendedName>
        <fullName evidence="4">Sesquiterpene synthase 14b</fullName>
        <shortName evidence="4">ShTPS14b</shortName>
    </recommendedName>
    <alternativeName>
        <fullName evidence="4">(+)-thujopsene synthase TPS14b</fullName>
        <ecNumber evidence="3">4.2.3.79</ecNumber>
    </alternativeName>
    <alternativeName>
        <fullName evidence="4">(E)-alpha-bisabolene synthase TPS14b</fullName>
        <ecNumber evidence="3">4.2.3.-</ecNumber>
    </alternativeName>
    <alternativeName>
        <fullName evidence="4">(E)-beta-farnesene synthase TPS14b</fullName>
        <ecNumber evidence="3">4.2.3.47</ecNumber>
    </alternativeName>
    <alternativeName>
        <fullName evidence="4">(E)-gamma-bisabolene synthase TPS14b</fullName>
        <ecNumber evidence="3">4.2.3.59</ecNumber>
    </alternativeName>
    <alternativeName>
        <fullName evidence="4">(Z)-beta-farnesene synthase TPS14b</fullName>
        <ecNumber evidence="3">4.2.3.-</ecNumber>
    </alternativeName>
    <alternativeName>
        <fullName evidence="4">Alpha-acoradiene synthase TPS14b</fullName>
        <ecNumber evidence="3">4.2.3.-</ecNumber>
    </alternativeName>
    <alternativeName>
        <fullName evidence="4">Alpha-cederene synthase TPS14b</fullName>
        <ecNumber evidence="3">4.2.3.-</ecNumber>
    </alternativeName>
    <alternativeName>
        <fullName evidence="4">Beta-acoradiene synthase TPS14b</fullName>
        <ecNumber evidence="3">4.2.3.-</ecNumber>
    </alternativeName>
    <alternativeName>
        <fullName evidence="4">Beta-bisabolene synthase TPS14b</fullName>
        <ecNumber evidence="3">4.2.3.-</ecNumber>
    </alternativeName>
    <alternativeName>
        <fullName evidence="4">Beta-myrcene synthase TPS14b</fullName>
        <ecNumber evidence="3">4.2.3.15</ecNumber>
    </alternativeName>
    <alternativeName>
        <fullName evidence="4">Limonene synthase TPS14b</fullName>
        <ecNumber evidence="3">4.2.3.-</ecNumber>
    </alternativeName>
    <alternativeName>
        <fullName evidence="4">Terpinolene synthase TPS14b</fullName>
        <ecNumber evidence="3">4.2.3.113</ecNumber>
    </alternativeName>
</protein>
<name>TS14B_SOLHA</name>
<accession>G8H5N1</accession>
<proteinExistence type="evidence at protein level"/>
<gene>
    <name evidence="4" type="primary">TPS14b</name>
</gene>
<comment type="function">
    <text evidence="3">Sesquiterpene synthase involved in the biosynthesis of volatile compounds (PubMed:21818683). Mediates the conversion of (2E,6E)-farnesyl diphosphate ((EE)-FPP) into (+)-thujopsene, beta-bisabolene, alpha-cederene, beta-acoradiene, (E)-gamma-bisabolene, (Z)-alpha-bisabolene, (Z)-beta-farnesene and (E)-beta-farnesene, and of (2Z,6Z)-farnesyl diphosphate ((ZZ)-FPP) into (E)-gamma-bisabolene, (E)-alpha-bisabolene, (E)-beta-farnesene, (Z)-beta-farnesene, beta-bisabolene, beta-acoradiene and alpha-acoradiene (PubMed:21818683). Can act with a low efficiency as a monoterpene synthase with geranyl diphosphate (GPP) as substrate, thus producing beta-myrcene, limonene and terpinolene (PubMed:21818683).</text>
</comment>
<comment type="catalytic activity">
    <reaction evidence="3">
        <text>(2E,6E)-farnesyl diphosphate = (E)-gamma-bisabolene + diphosphate</text>
        <dbReference type="Rhea" id="RHEA:28298"/>
        <dbReference type="ChEBI" id="CHEBI:33019"/>
        <dbReference type="ChEBI" id="CHEBI:49239"/>
        <dbReference type="ChEBI" id="CHEBI:175763"/>
        <dbReference type="EC" id="4.2.3.59"/>
    </reaction>
    <physiologicalReaction direction="left-to-right" evidence="3">
        <dbReference type="Rhea" id="RHEA:28299"/>
    </physiologicalReaction>
</comment>
<comment type="catalytic activity">
    <reaction evidence="3">
        <text>(2Z,6Z)-farnesyl diphosphate = (E)-gamma-bisabolene + diphosphate</text>
        <dbReference type="Rhea" id="RHEA:68468"/>
        <dbReference type="ChEBI" id="CHEBI:33019"/>
        <dbReference type="ChEBI" id="CHEBI:49239"/>
        <dbReference type="ChEBI" id="CHEBI:60374"/>
    </reaction>
    <physiologicalReaction direction="left-to-right" evidence="3">
        <dbReference type="Rhea" id="RHEA:68469"/>
    </physiologicalReaction>
</comment>
<comment type="catalytic activity">
    <reaction evidence="3">
        <text>(2Z,6Z)-farnesyl diphosphate = (E)-alpha-bisabolene + diphosphate</text>
        <dbReference type="Rhea" id="RHEA:68472"/>
        <dbReference type="ChEBI" id="CHEBI:33019"/>
        <dbReference type="ChEBI" id="CHEBI:49242"/>
        <dbReference type="ChEBI" id="CHEBI:60374"/>
    </reaction>
    <physiologicalReaction direction="left-to-right" evidence="3">
        <dbReference type="Rhea" id="RHEA:68473"/>
    </physiologicalReaction>
</comment>
<comment type="catalytic activity">
    <reaction evidence="3">
        <text>(2Z,6Z)-farnesyl diphosphate = (Z)-beta-farnesene + diphosphate</text>
        <dbReference type="Rhea" id="RHEA:68504"/>
        <dbReference type="ChEBI" id="CHEBI:33019"/>
        <dbReference type="ChEBI" id="CHEBI:39242"/>
        <dbReference type="ChEBI" id="CHEBI:60374"/>
    </reaction>
    <physiologicalReaction direction="left-to-right" evidence="3">
        <dbReference type="Rhea" id="RHEA:68505"/>
    </physiologicalReaction>
</comment>
<comment type="catalytic activity">
    <reaction evidence="3">
        <text>(2E,6E)-farnesyl diphosphate = (E)-beta-farnesene + diphosphate</text>
        <dbReference type="Rhea" id="RHEA:27425"/>
        <dbReference type="ChEBI" id="CHEBI:10418"/>
        <dbReference type="ChEBI" id="CHEBI:33019"/>
        <dbReference type="ChEBI" id="CHEBI:175763"/>
        <dbReference type="EC" id="4.2.3.47"/>
    </reaction>
    <physiologicalReaction direction="left-to-right" evidence="3">
        <dbReference type="Rhea" id="RHEA:27426"/>
    </physiologicalReaction>
</comment>
<comment type="catalytic activity">
    <reaction evidence="3">
        <text>(2E,6E)-farnesyl diphosphate = (+)-thujopsene + diphosphate</text>
        <dbReference type="Rhea" id="RHEA:30375"/>
        <dbReference type="ChEBI" id="CHEBI:33019"/>
        <dbReference type="ChEBI" id="CHEBI:61737"/>
        <dbReference type="ChEBI" id="CHEBI:175763"/>
        <dbReference type="EC" id="4.2.3.79"/>
    </reaction>
    <physiologicalReaction direction="left-to-right" evidence="3">
        <dbReference type="Rhea" id="RHEA:30376"/>
    </physiologicalReaction>
</comment>
<comment type="catalytic activity">
    <reaction evidence="3">
        <text>(2Z,6Z)-farnesyl diphosphate = (E)-beta-farnesene + diphosphate</text>
        <dbReference type="Rhea" id="RHEA:68544"/>
        <dbReference type="ChEBI" id="CHEBI:10418"/>
        <dbReference type="ChEBI" id="CHEBI:33019"/>
        <dbReference type="ChEBI" id="CHEBI:60374"/>
    </reaction>
    <physiologicalReaction direction="left-to-right" evidence="3">
        <dbReference type="Rhea" id="RHEA:68545"/>
    </physiologicalReaction>
</comment>
<comment type="catalytic activity">
    <reaction evidence="3">
        <text>(2E,6E)-farnesyl diphosphate = (Z)-beta-farnesene + diphosphate</text>
        <dbReference type="Rhea" id="RHEA:68508"/>
        <dbReference type="ChEBI" id="CHEBI:33019"/>
        <dbReference type="ChEBI" id="CHEBI:39242"/>
        <dbReference type="ChEBI" id="CHEBI:175763"/>
    </reaction>
    <physiologicalReaction direction="left-to-right" evidence="3">
        <dbReference type="Rhea" id="RHEA:68509"/>
    </physiologicalReaction>
</comment>
<comment type="catalytic activity">
    <reaction evidence="3">
        <text>(2Z,6Z)-farnesyl diphosphate = beta-acoradiene + diphosphate</text>
        <dbReference type="Rhea" id="RHEA:68516"/>
        <dbReference type="ChEBI" id="CHEBI:33019"/>
        <dbReference type="ChEBI" id="CHEBI:60374"/>
        <dbReference type="ChEBI" id="CHEBI:172925"/>
    </reaction>
    <physiologicalReaction direction="left-to-right" evidence="3">
        <dbReference type="Rhea" id="RHEA:68517"/>
    </physiologicalReaction>
</comment>
<comment type="catalytic activity">
    <reaction evidence="3">
        <text>(2Z,6Z)-farnesyl diphosphate = alpha-acoradiene + diphosphate</text>
        <dbReference type="Rhea" id="RHEA:68512"/>
        <dbReference type="ChEBI" id="CHEBI:33019"/>
        <dbReference type="ChEBI" id="CHEBI:60374"/>
        <dbReference type="ChEBI" id="CHEBI:172926"/>
    </reaction>
    <physiologicalReaction direction="left-to-right" evidence="3">
        <dbReference type="Rhea" id="RHEA:68513"/>
    </physiologicalReaction>
</comment>
<comment type="catalytic activity">
    <reaction evidence="3">
        <text>(2Z,6Z)-farnesyl diphosphate = beta-bisabolene + diphosphate</text>
        <dbReference type="Rhea" id="RHEA:68524"/>
        <dbReference type="ChEBI" id="CHEBI:33019"/>
        <dbReference type="ChEBI" id="CHEBI:49249"/>
        <dbReference type="ChEBI" id="CHEBI:60374"/>
    </reaction>
    <physiologicalReaction direction="left-to-right" evidence="3">
        <dbReference type="Rhea" id="RHEA:68525"/>
    </physiologicalReaction>
</comment>
<comment type="catalytic activity">
    <reaction evidence="3">
        <text>(2E,6E)-farnesyl diphosphate = (-)-alpha-cedrene + diphosphate</text>
        <dbReference type="Rhea" id="RHEA:68536"/>
        <dbReference type="ChEBI" id="CHEBI:10216"/>
        <dbReference type="ChEBI" id="CHEBI:33019"/>
        <dbReference type="ChEBI" id="CHEBI:175763"/>
    </reaction>
    <physiologicalReaction direction="left-to-right" evidence="3">
        <dbReference type="Rhea" id="RHEA:68537"/>
    </physiologicalReaction>
</comment>
<comment type="catalytic activity">
    <reaction evidence="3">
        <text>(2E,6E)-farnesyl diphosphate = beta-bisabolene + diphosphate</text>
        <dbReference type="Rhea" id="RHEA:68528"/>
        <dbReference type="ChEBI" id="CHEBI:33019"/>
        <dbReference type="ChEBI" id="CHEBI:49249"/>
        <dbReference type="ChEBI" id="CHEBI:175763"/>
    </reaction>
    <physiologicalReaction direction="left-to-right" evidence="3">
        <dbReference type="Rhea" id="RHEA:68529"/>
    </physiologicalReaction>
</comment>
<comment type="catalytic activity">
    <reaction evidence="3">
        <text>(2E,6E)-farnesyl diphosphate = beta-acoradiene + diphosphate</text>
        <dbReference type="Rhea" id="RHEA:68520"/>
        <dbReference type="ChEBI" id="CHEBI:33019"/>
        <dbReference type="ChEBI" id="CHEBI:172925"/>
        <dbReference type="ChEBI" id="CHEBI:175763"/>
    </reaction>
    <physiologicalReaction direction="left-to-right" evidence="3">
        <dbReference type="Rhea" id="RHEA:68521"/>
    </physiologicalReaction>
</comment>
<comment type="catalytic activity">
    <reaction evidence="3">
        <text>(2Z,6Z)-farnesyl diphosphate = (-)-alpha-cedrene + diphosphate</text>
        <dbReference type="Rhea" id="RHEA:68540"/>
        <dbReference type="ChEBI" id="CHEBI:10216"/>
        <dbReference type="ChEBI" id="CHEBI:33019"/>
        <dbReference type="ChEBI" id="CHEBI:60374"/>
    </reaction>
    <physiologicalReaction direction="left-to-right" evidence="3">
        <dbReference type="Rhea" id="RHEA:68541"/>
    </physiologicalReaction>
</comment>
<comment type="catalytic activity">
    <reaction evidence="3">
        <text>(2E)-geranyl diphosphate = terpinolene + diphosphate</text>
        <dbReference type="Rhea" id="RHEA:25500"/>
        <dbReference type="ChEBI" id="CHEBI:9457"/>
        <dbReference type="ChEBI" id="CHEBI:33019"/>
        <dbReference type="ChEBI" id="CHEBI:58057"/>
        <dbReference type="EC" id="4.2.3.113"/>
    </reaction>
    <physiologicalReaction direction="left-to-right" evidence="3">
        <dbReference type="Rhea" id="RHEA:25501"/>
    </physiologicalReaction>
</comment>
<comment type="catalytic activity">
    <reaction evidence="3">
        <text>(2E)-geranyl diphosphate = limonene + diphosphate</text>
        <dbReference type="Rhea" id="RHEA:68640"/>
        <dbReference type="ChEBI" id="CHEBI:15384"/>
        <dbReference type="ChEBI" id="CHEBI:33019"/>
        <dbReference type="ChEBI" id="CHEBI:58057"/>
    </reaction>
    <physiologicalReaction direction="left-to-right" evidence="3">
        <dbReference type="Rhea" id="RHEA:68641"/>
    </physiologicalReaction>
</comment>
<comment type="catalytic activity">
    <reaction evidence="3">
        <text>(2E)-geranyl diphosphate = beta-myrcene + diphosphate</text>
        <dbReference type="Rhea" id="RHEA:16965"/>
        <dbReference type="ChEBI" id="CHEBI:17221"/>
        <dbReference type="ChEBI" id="CHEBI:33019"/>
        <dbReference type="ChEBI" id="CHEBI:58057"/>
        <dbReference type="EC" id="4.2.3.15"/>
    </reaction>
    <physiologicalReaction direction="left-to-right" evidence="3">
        <dbReference type="Rhea" id="RHEA:16966"/>
    </physiologicalReaction>
</comment>
<comment type="cofactor">
    <cofactor evidence="1">
        <name>Mg(2+)</name>
        <dbReference type="ChEBI" id="CHEBI:18420"/>
    </cofactor>
    <cofactor evidence="1">
        <name>Mn(2+)</name>
        <dbReference type="ChEBI" id="CHEBI:29035"/>
    </cofactor>
    <text evidence="1">Binds 3 Mg(2+) or Mn(2+) ions per subunit.</text>
</comment>
<comment type="pathway">
    <text evidence="3">Secondary metabolite biosynthesis; terpenoid biosynthesis.</text>
</comment>
<comment type="domain">
    <text evidence="2">The Asp-Asp-Xaa-Xaa-Asp/Glu (DDXXD/E) motif is important for the catalytic activity, presumably through binding to Mg(2+).</text>
</comment>
<comment type="similarity">
    <text evidence="5">Belongs to the terpene synthase family. Tpsa subfamily.</text>
</comment>
<reference key="1">
    <citation type="journal article" date="2011" name="Plant Mol. Biol.">
        <title>RNA-seq discovery, functional characterization, and comparison of sesquiterpene synthases from Solanum lycopersicum and Solanum habrochaites trichomes.</title>
        <authorList>
            <person name="Bleeker P.M."/>
            <person name="Spyropoulou E.A."/>
            <person name="Diergaarde P.J."/>
            <person name="Volpin H."/>
            <person name="De Both M.T.J."/>
            <person name="Zerbe P."/>
            <person name="Bohlmann J."/>
            <person name="Falara V."/>
            <person name="Matsuba Y."/>
            <person name="Pichersky E."/>
            <person name="Haring M.A."/>
            <person name="Schuurink R.C."/>
        </authorList>
    </citation>
    <scope>NUCLEOTIDE SEQUENCE [MRNA]</scope>
    <scope>FUNCTION</scope>
    <scope>CATALYTIC ACTIVITY</scope>
    <scope>PATHWAY</scope>
    <scope>GENE FAMILY</scope>
    <source>
        <strain>cv. PI126449</strain>
    </source>
</reference>
<dbReference type="EC" id="4.2.3.79" evidence="3"/>
<dbReference type="EC" id="4.2.3.-" evidence="3"/>
<dbReference type="EC" id="4.2.3.47" evidence="3"/>
<dbReference type="EC" id="4.2.3.59" evidence="3"/>
<dbReference type="EC" id="4.2.3.15" evidence="3"/>
<dbReference type="EC" id="4.2.3.113" evidence="3"/>
<dbReference type="EMBL" id="JN402392">
    <property type="protein sequence ID" value="AEM23829.1"/>
    <property type="molecule type" value="mRNA"/>
</dbReference>
<dbReference type="SMR" id="G8H5N1"/>
<dbReference type="UniPathway" id="UPA00213"/>
<dbReference type="GO" id="GO:0016787">
    <property type="term" value="F:hydrolase activity"/>
    <property type="evidence" value="ECO:0007669"/>
    <property type="project" value="UniProtKB-KW"/>
</dbReference>
<dbReference type="GO" id="GO:0000287">
    <property type="term" value="F:magnesium ion binding"/>
    <property type="evidence" value="ECO:0007669"/>
    <property type="project" value="InterPro"/>
</dbReference>
<dbReference type="GO" id="GO:0010333">
    <property type="term" value="F:terpene synthase activity"/>
    <property type="evidence" value="ECO:0000314"/>
    <property type="project" value="UniProtKB"/>
</dbReference>
<dbReference type="GO" id="GO:0016102">
    <property type="term" value="P:diterpenoid biosynthetic process"/>
    <property type="evidence" value="ECO:0007669"/>
    <property type="project" value="InterPro"/>
</dbReference>
<dbReference type="GO" id="GO:0016114">
    <property type="term" value="P:terpenoid biosynthetic process"/>
    <property type="evidence" value="ECO:0000314"/>
    <property type="project" value="UniProtKB"/>
</dbReference>
<dbReference type="CDD" id="cd00684">
    <property type="entry name" value="Terpene_cyclase_plant_C1"/>
    <property type="match status" value="1"/>
</dbReference>
<dbReference type="FunFam" id="1.10.600.10:FF:000007">
    <property type="entry name" value="Isoprene synthase, chloroplastic"/>
    <property type="match status" value="1"/>
</dbReference>
<dbReference type="FunFam" id="1.50.10.130:FF:000001">
    <property type="entry name" value="Isoprene synthase, chloroplastic"/>
    <property type="match status" value="1"/>
</dbReference>
<dbReference type="Gene3D" id="1.10.600.10">
    <property type="entry name" value="Farnesyl Diphosphate Synthase"/>
    <property type="match status" value="1"/>
</dbReference>
<dbReference type="Gene3D" id="1.50.10.130">
    <property type="entry name" value="Terpene synthase, N-terminal domain"/>
    <property type="match status" value="1"/>
</dbReference>
<dbReference type="InterPro" id="IPR008949">
    <property type="entry name" value="Isoprenoid_synthase_dom_sf"/>
</dbReference>
<dbReference type="InterPro" id="IPR034741">
    <property type="entry name" value="Terpene_cyclase-like_1_C"/>
</dbReference>
<dbReference type="InterPro" id="IPR044814">
    <property type="entry name" value="Terpene_cyclase_plant_C1"/>
</dbReference>
<dbReference type="InterPro" id="IPR001906">
    <property type="entry name" value="Terpene_synth_N"/>
</dbReference>
<dbReference type="InterPro" id="IPR036965">
    <property type="entry name" value="Terpene_synth_N_sf"/>
</dbReference>
<dbReference type="InterPro" id="IPR050148">
    <property type="entry name" value="Terpene_synthase-like"/>
</dbReference>
<dbReference type="InterPro" id="IPR005630">
    <property type="entry name" value="Terpene_synthase_metal-bd"/>
</dbReference>
<dbReference type="InterPro" id="IPR008930">
    <property type="entry name" value="Terpenoid_cyclase/PrenylTrfase"/>
</dbReference>
<dbReference type="PANTHER" id="PTHR31225">
    <property type="entry name" value="OS04G0344100 PROTEIN-RELATED"/>
    <property type="match status" value="1"/>
</dbReference>
<dbReference type="PANTHER" id="PTHR31225:SF229">
    <property type="entry name" value="SESQUITERPENE SYNTHASE 14"/>
    <property type="match status" value="1"/>
</dbReference>
<dbReference type="Pfam" id="PF01397">
    <property type="entry name" value="Terpene_synth"/>
    <property type="match status" value="1"/>
</dbReference>
<dbReference type="Pfam" id="PF03936">
    <property type="entry name" value="Terpene_synth_C"/>
    <property type="match status" value="1"/>
</dbReference>
<dbReference type="SFLD" id="SFLDS00005">
    <property type="entry name" value="Isoprenoid_Synthase_Type_I"/>
    <property type="match status" value="1"/>
</dbReference>
<dbReference type="SFLD" id="SFLDG01019">
    <property type="entry name" value="Terpene_Cyclase_Like_1_C_Termi"/>
    <property type="match status" value="1"/>
</dbReference>
<dbReference type="SUPFAM" id="SSF48239">
    <property type="entry name" value="Terpenoid cyclases/Protein prenyltransferases"/>
    <property type="match status" value="1"/>
</dbReference>
<dbReference type="SUPFAM" id="SSF48576">
    <property type="entry name" value="Terpenoid synthases"/>
    <property type="match status" value="1"/>
</dbReference>
<sequence length="554" mass="65036">MNQLAMVNTTITRPLANYHSSVWGNYFLSYTPQLTEISSQEKRELEELKEKVRQMLVETPDNSTQKLVLIDTIQRLGVAYHFENHIKISIQNIFDEFEKNKNKDNDDDLCVVALRFRLVRGQRHYMSSDVFTRFTNDDGKFKETLTKDVQGLLNLYEATHLRVHGEEILEEALSFTVTHLKSMSPKLDNSLKAQVSEALFQPIHTNIPRVVARKYIRIYENIESHDDLLLKFAKLDFHILQKMHQRELSELTRWWKDLDHSNKYPYARDKLVECYFWAIGVYFGPQYKRARRTLTKLIVIITITDDLYDAYATYDELVPYTNAVERCEISAMHSISPYMRPLYQVFLDYFDEMEEELTKDGKAHYVYYAKIETNKWIKSYLKEAEWLKNDIIPKCEEYKRNATITISNQMNLITCLIVAGEFISKETFEWMINESLIAPASSLINRLKDDIIGHEHEQQREHGASFIECYVKEYRASKQEAYVEARRQITNAWKDINTDYLHATQVPTFVLEPALNLSRLVDILQEDDFTDSQNFLKDTITLLFVDSVNSTSCG</sequence>
<feature type="chain" id="PRO_0000454685" description="Sesquiterpene synthase 14b">
    <location>
        <begin position="1"/>
        <end position="554"/>
    </location>
</feature>
<feature type="short sequence motif" description="DDXXD motif" evidence="1">
    <location>
        <begin position="305"/>
        <end position="309"/>
    </location>
</feature>
<feature type="binding site" evidence="2">
    <location>
        <position position="305"/>
    </location>
    <ligand>
        <name>Mg(2+)</name>
        <dbReference type="ChEBI" id="CHEBI:18420"/>
        <label>1</label>
    </ligand>
</feature>
<feature type="binding site" evidence="2">
    <location>
        <position position="305"/>
    </location>
    <ligand>
        <name>Mg(2+)</name>
        <dbReference type="ChEBI" id="CHEBI:18420"/>
        <label>2</label>
    </ligand>
</feature>
<feature type="binding site" evidence="2">
    <location>
        <position position="309"/>
    </location>
    <ligand>
        <name>Mg(2+)</name>
        <dbReference type="ChEBI" id="CHEBI:18420"/>
        <label>1</label>
    </ligand>
</feature>
<feature type="binding site" evidence="2">
    <location>
        <position position="309"/>
    </location>
    <ligand>
        <name>Mg(2+)</name>
        <dbReference type="ChEBI" id="CHEBI:18420"/>
        <label>2</label>
    </ligand>
</feature>
<feature type="binding site" evidence="2">
    <location>
        <position position="449"/>
    </location>
    <ligand>
        <name>Mg(2+)</name>
        <dbReference type="ChEBI" id="CHEBI:18420"/>
        <label>3</label>
    </ligand>
</feature>
<feature type="binding site" evidence="2">
    <location>
        <position position="457"/>
    </location>
    <ligand>
        <name>Mg(2+)</name>
        <dbReference type="ChEBI" id="CHEBI:18420"/>
        <label>3</label>
    </ligand>
</feature>
<organism>
    <name type="scientific">Solanum habrochaites</name>
    <name type="common">Wild tomato</name>
    <name type="synonym">Lycopersicon hirsutum</name>
    <dbReference type="NCBI Taxonomy" id="62890"/>
    <lineage>
        <taxon>Eukaryota</taxon>
        <taxon>Viridiplantae</taxon>
        <taxon>Streptophyta</taxon>
        <taxon>Embryophyta</taxon>
        <taxon>Tracheophyta</taxon>
        <taxon>Spermatophyta</taxon>
        <taxon>Magnoliopsida</taxon>
        <taxon>eudicotyledons</taxon>
        <taxon>Gunneridae</taxon>
        <taxon>Pentapetalae</taxon>
        <taxon>asterids</taxon>
        <taxon>lamiids</taxon>
        <taxon>Solanales</taxon>
        <taxon>Solanaceae</taxon>
        <taxon>Solanoideae</taxon>
        <taxon>Solaneae</taxon>
        <taxon>Solanum</taxon>
        <taxon>Solanum subgen. Lycopersicon</taxon>
    </lineage>
</organism>